<feature type="chain" id="PRO_0000227315" description="UvrABC system protein B">
    <location>
        <begin position="1"/>
        <end position="658"/>
    </location>
</feature>
<feature type="domain" description="Helicase ATP-binding" evidence="1">
    <location>
        <begin position="26"/>
        <end position="414"/>
    </location>
</feature>
<feature type="domain" description="Helicase C-terminal" evidence="1">
    <location>
        <begin position="430"/>
        <end position="596"/>
    </location>
</feature>
<feature type="domain" description="UVR" evidence="1">
    <location>
        <begin position="622"/>
        <end position="657"/>
    </location>
</feature>
<feature type="short sequence motif" description="Beta-hairpin">
    <location>
        <begin position="92"/>
        <end position="115"/>
    </location>
</feature>
<feature type="binding site" evidence="1">
    <location>
        <begin position="39"/>
        <end position="46"/>
    </location>
    <ligand>
        <name>ATP</name>
        <dbReference type="ChEBI" id="CHEBI:30616"/>
    </ligand>
</feature>
<name>UVRB_GEOKA</name>
<comment type="function">
    <text evidence="1">The UvrABC repair system catalyzes the recognition and processing of DNA lesions. A damage recognition complex composed of 2 UvrA and 2 UvrB subunits scans DNA for abnormalities. Upon binding of the UvrA(2)B(2) complex to a putative damaged site, the DNA wraps around one UvrB monomer. DNA wrap is dependent on ATP binding by UvrB and probably causes local melting of the DNA helix, facilitating insertion of UvrB beta-hairpin between the DNA strands. Then UvrB probes one DNA strand for the presence of a lesion. If a lesion is found the UvrA subunits dissociate and the UvrB-DNA preincision complex is formed. This complex is subsequently bound by UvrC and the second UvrB is released. If no lesion is found, the DNA wraps around the other UvrB subunit that will check the other stand for damage.</text>
</comment>
<comment type="subunit">
    <text evidence="1">Forms a heterotetramer with UvrA during the search for lesions. Interacts with UvrC in an incision complex.</text>
</comment>
<comment type="subcellular location">
    <subcellularLocation>
        <location evidence="1">Cytoplasm</location>
    </subcellularLocation>
</comment>
<comment type="domain">
    <text evidence="1">The beta-hairpin motif is involved in DNA binding.</text>
</comment>
<comment type="similarity">
    <text evidence="1">Belongs to the UvrB family.</text>
</comment>
<protein>
    <recommendedName>
        <fullName evidence="1">UvrABC system protein B</fullName>
        <shortName evidence="1">Protein UvrB</shortName>
    </recommendedName>
    <alternativeName>
        <fullName evidence="1">Excinuclease ABC subunit B</fullName>
    </alternativeName>
</protein>
<evidence type="ECO:0000255" key="1">
    <source>
        <dbReference type="HAMAP-Rule" id="MF_00204"/>
    </source>
</evidence>
<accession>Q5KVB5</accession>
<gene>
    <name evidence="1" type="primary">uvrB</name>
    <name type="ordered locus">GK3086</name>
</gene>
<keyword id="KW-0067">ATP-binding</keyword>
<keyword id="KW-0963">Cytoplasm</keyword>
<keyword id="KW-0227">DNA damage</keyword>
<keyword id="KW-0228">DNA excision</keyword>
<keyword id="KW-0234">DNA repair</keyword>
<keyword id="KW-0267">Excision nuclease</keyword>
<keyword id="KW-0547">Nucleotide-binding</keyword>
<keyword id="KW-1185">Reference proteome</keyword>
<keyword id="KW-0742">SOS response</keyword>
<organism>
    <name type="scientific">Geobacillus kaustophilus (strain HTA426)</name>
    <dbReference type="NCBI Taxonomy" id="235909"/>
    <lineage>
        <taxon>Bacteria</taxon>
        <taxon>Bacillati</taxon>
        <taxon>Bacillota</taxon>
        <taxon>Bacilli</taxon>
        <taxon>Bacillales</taxon>
        <taxon>Anoxybacillaceae</taxon>
        <taxon>Geobacillus</taxon>
        <taxon>Geobacillus thermoleovorans group</taxon>
    </lineage>
</organism>
<dbReference type="EMBL" id="BA000043">
    <property type="protein sequence ID" value="BAD77371.1"/>
    <property type="molecule type" value="Genomic_DNA"/>
</dbReference>
<dbReference type="RefSeq" id="WP_011232556.1">
    <property type="nucleotide sequence ID" value="NC_006510.1"/>
</dbReference>
<dbReference type="SMR" id="Q5KVB5"/>
<dbReference type="STRING" id="235909.GK3086"/>
<dbReference type="KEGG" id="gka:GK3086"/>
<dbReference type="eggNOG" id="COG0556">
    <property type="taxonomic scope" value="Bacteria"/>
</dbReference>
<dbReference type="HOGENOM" id="CLU_009621_2_1_9"/>
<dbReference type="Proteomes" id="UP000001172">
    <property type="component" value="Chromosome"/>
</dbReference>
<dbReference type="GO" id="GO:0005737">
    <property type="term" value="C:cytoplasm"/>
    <property type="evidence" value="ECO:0007669"/>
    <property type="project" value="UniProtKB-SubCell"/>
</dbReference>
<dbReference type="GO" id="GO:0009380">
    <property type="term" value="C:excinuclease repair complex"/>
    <property type="evidence" value="ECO:0007669"/>
    <property type="project" value="InterPro"/>
</dbReference>
<dbReference type="GO" id="GO:0005524">
    <property type="term" value="F:ATP binding"/>
    <property type="evidence" value="ECO:0007669"/>
    <property type="project" value="UniProtKB-UniRule"/>
</dbReference>
<dbReference type="GO" id="GO:0016887">
    <property type="term" value="F:ATP hydrolysis activity"/>
    <property type="evidence" value="ECO:0007669"/>
    <property type="project" value="InterPro"/>
</dbReference>
<dbReference type="GO" id="GO:0003677">
    <property type="term" value="F:DNA binding"/>
    <property type="evidence" value="ECO:0007669"/>
    <property type="project" value="UniProtKB-UniRule"/>
</dbReference>
<dbReference type="GO" id="GO:0009381">
    <property type="term" value="F:excinuclease ABC activity"/>
    <property type="evidence" value="ECO:0007669"/>
    <property type="project" value="UniProtKB-UniRule"/>
</dbReference>
<dbReference type="GO" id="GO:0006289">
    <property type="term" value="P:nucleotide-excision repair"/>
    <property type="evidence" value="ECO:0007669"/>
    <property type="project" value="UniProtKB-UniRule"/>
</dbReference>
<dbReference type="GO" id="GO:0009432">
    <property type="term" value="P:SOS response"/>
    <property type="evidence" value="ECO:0007669"/>
    <property type="project" value="UniProtKB-UniRule"/>
</dbReference>
<dbReference type="CDD" id="cd17916">
    <property type="entry name" value="DEXHc_UvrB"/>
    <property type="match status" value="1"/>
</dbReference>
<dbReference type="CDD" id="cd18790">
    <property type="entry name" value="SF2_C_UvrB"/>
    <property type="match status" value="1"/>
</dbReference>
<dbReference type="Gene3D" id="3.40.50.300">
    <property type="entry name" value="P-loop containing nucleotide triphosphate hydrolases"/>
    <property type="match status" value="3"/>
</dbReference>
<dbReference type="Gene3D" id="4.10.860.10">
    <property type="entry name" value="UVR domain"/>
    <property type="match status" value="1"/>
</dbReference>
<dbReference type="HAMAP" id="MF_00204">
    <property type="entry name" value="UvrB"/>
    <property type="match status" value="1"/>
</dbReference>
<dbReference type="InterPro" id="IPR006935">
    <property type="entry name" value="Helicase/UvrB_N"/>
</dbReference>
<dbReference type="InterPro" id="IPR014001">
    <property type="entry name" value="Helicase_ATP-bd"/>
</dbReference>
<dbReference type="InterPro" id="IPR001650">
    <property type="entry name" value="Helicase_C-like"/>
</dbReference>
<dbReference type="InterPro" id="IPR027417">
    <property type="entry name" value="P-loop_NTPase"/>
</dbReference>
<dbReference type="InterPro" id="IPR001943">
    <property type="entry name" value="UVR_dom"/>
</dbReference>
<dbReference type="InterPro" id="IPR036876">
    <property type="entry name" value="UVR_dom_sf"/>
</dbReference>
<dbReference type="InterPro" id="IPR004807">
    <property type="entry name" value="UvrB"/>
</dbReference>
<dbReference type="InterPro" id="IPR041471">
    <property type="entry name" value="UvrB_inter"/>
</dbReference>
<dbReference type="InterPro" id="IPR024759">
    <property type="entry name" value="UvrB_YAD/RRR_dom"/>
</dbReference>
<dbReference type="NCBIfam" id="NF003673">
    <property type="entry name" value="PRK05298.1"/>
    <property type="match status" value="1"/>
</dbReference>
<dbReference type="NCBIfam" id="TIGR00631">
    <property type="entry name" value="uvrb"/>
    <property type="match status" value="1"/>
</dbReference>
<dbReference type="PANTHER" id="PTHR24029">
    <property type="entry name" value="UVRABC SYSTEM PROTEIN B"/>
    <property type="match status" value="1"/>
</dbReference>
<dbReference type="PANTHER" id="PTHR24029:SF0">
    <property type="entry name" value="UVRABC SYSTEM PROTEIN B"/>
    <property type="match status" value="1"/>
</dbReference>
<dbReference type="Pfam" id="PF00271">
    <property type="entry name" value="Helicase_C"/>
    <property type="match status" value="1"/>
</dbReference>
<dbReference type="Pfam" id="PF04851">
    <property type="entry name" value="ResIII"/>
    <property type="match status" value="1"/>
</dbReference>
<dbReference type="Pfam" id="PF02151">
    <property type="entry name" value="UVR"/>
    <property type="match status" value="1"/>
</dbReference>
<dbReference type="Pfam" id="PF12344">
    <property type="entry name" value="UvrB"/>
    <property type="match status" value="1"/>
</dbReference>
<dbReference type="Pfam" id="PF17757">
    <property type="entry name" value="UvrB_inter"/>
    <property type="match status" value="1"/>
</dbReference>
<dbReference type="SMART" id="SM00487">
    <property type="entry name" value="DEXDc"/>
    <property type="match status" value="1"/>
</dbReference>
<dbReference type="SMART" id="SM00490">
    <property type="entry name" value="HELICc"/>
    <property type="match status" value="1"/>
</dbReference>
<dbReference type="SUPFAM" id="SSF46600">
    <property type="entry name" value="C-terminal UvrC-binding domain of UvrB"/>
    <property type="match status" value="1"/>
</dbReference>
<dbReference type="SUPFAM" id="SSF52540">
    <property type="entry name" value="P-loop containing nucleoside triphosphate hydrolases"/>
    <property type="match status" value="2"/>
</dbReference>
<dbReference type="PROSITE" id="PS51192">
    <property type="entry name" value="HELICASE_ATP_BIND_1"/>
    <property type="match status" value="1"/>
</dbReference>
<dbReference type="PROSITE" id="PS51194">
    <property type="entry name" value="HELICASE_CTER"/>
    <property type="match status" value="1"/>
</dbReference>
<dbReference type="PROSITE" id="PS50151">
    <property type="entry name" value="UVR"/>
    <property type="match status" value="1"/>
</dbReference>
<sequence length="658" mass="75499">MEGRFQLVAPYEPQGDQPQAIAKLVDGLRRGVKHQTLLGATGTGKTFTISNVIAQVNKPTLVIAHNKTLAGQLYSELKEFFPHNAVEYFVSYYDYYQPEAYVPQTDTYIEKDAKINDEIDKLRHSATSALFERRDVIIVASVSCIYGLGSPEEYRELVVSLRVGMEIERNALLRRLVDIQYDRNDIDFRRGTFRVRGDVVEIFPASRDEHCIRVEFFGDEIERIREVDALTGEVLGEREHVAIFPASHFVTREEKMRLAIQNIEQELEERLAELRAQGKLLEAQRLEQRTRYDLEMMREMGFCSGIENYSRHLALRPPGSTPYTLLDYFPDDFLIIVDESHVTLPQLRGMYNGDRARKQVLVDHGFRLPSALDNRPLTFEEFEQKINQIIYVSATPGPYELEHSPGVVEQIIRPTGLLDPTIDVRPTKGQIDDLIGEIRERVERNERTLVTTLTKKMAEDLTDYLKEAGIKVAYLHSEIKTLERIEIIRDLRLGKYDVLVGINLLREGLDIPEVSLVAILDADKEGFLRSERSLIQTIGRAARNANGHVIMYADTITKSMEVAIQETKRRRAIQEEYNRKHGIVPRTVKKEIRDVIRATYAAEETEMYEAKPAAAMTKQEREELIRTLEAEMKEAAKALDFERAAQLRDIIFELKAEG</sequence>
<reference key="1">
    <citation type="journal article" date="2004" name="Nucleic Acids Res.">
        <title>Thermoadaptation trait revealed by the genome sequence of thermophilic Geobacillus kaustophilus.</title>
        <authorList>
            <person name="Takami H."/>
            <person name="Takaki Y."/>
            <person name="Chee G.-J."/>
            <person name="Nishi S."/>
            <person name="Shimamura S."/>
            <person name="Suzuki H."/>
            <person name="Matsui S."/>
            <person name="Uchiyama I."/>
        </authorList>
    </citation>
    <scope>NUCLEOTIDE SEQUENCE [LARGE SCALE GENOMIC DNA]</scope>
    <source>
        <strain>HTA426</strain>
    </source>
</reference>
<proteinExistence type="inferred from homology"/>